<feature type="chain" id="PRO_0000129479" description="Large ribosomal subunit protein uL23">
    <location>
        <begin position="1"/>
        <end position="142"/>
    </location>
</feature>
<dbReference type="EMBL" id="X05919">
    <property type="protein sequence ID" value="CAA29354.1"/>
    <property type="molecule type" value="Genomic_DNA"/>
</dbReference>
<dbReference type="PIR" id="S06373">
    <property type="entry name" value="R5HQ25"/>
</dbReference>
<dbReference type="SMR" id="P08792"/>
<dbReference type="GO" id="GO:1990904">
    <property type="term" value="C:ribonucleoprotein complex"/>
    <property type="evidence" value="ECO:0007669"/>
    <property type="project" value="UniProtKB-KW"/>
</dbReference>
<dbReference type="GO" id="GO:0005840">
    <property type="term" value="C:ribosome"/>
    <property type="evidence" value="ECO:0007669"/>
    <property type="project" value="UniProtKB-KW"/>
</dbReference>
<dbReference type="GO" id="GO:0019843">
    <property type="term" value="F:rRNA binding"/>
    <property type="evidence" value="ECO:0007669"/>
    <property type="project" value="UniProtKB-KW"/>
</dbReference>
<dbReference type="GO" id="GO:0003735">
    <property type="term" value="F:structural constituent of ribosome"/>
    <property type="evidence" value="ECO:0007669"/>
    <property type="project" value="InterPro"/>
</dbReference>
<dbReference type="GO" id="GO:0006412">
    <property type="term" value="P:translation"/>
    <property type="evidence" value="ECO:0007669"/>
    <property type="project" value="InterPro"/>
</dbReference>
<dbReference type="FunFam" id="3.30.70.330:FF:000035">
    <property type="entry name" value="60S ribosomal protein L23a"/>
    <property type="match status" value="1"/>
</dbReference>
<dbReference type="Gene3D" id="3.30.70.330">
    <property type="match status" value="1"/>
</dbReference>
<dbReference type="HAMAP" id="MF_01369_A">
    <property type="entry name" value="Ribosomal_uL23_A"/>
    <property type="match status" value="1"/>
</dbReference>
<dbReference type="InterPro" id="IPR012677">
    <property type="entry name" value="Nucleotide-bd_a/b_plait_sf"/>
</dbReference>
<dbReference type="InterPro" id="IPR013025">
    <property type="entry name" value="Ribosomal_uL23-like"/>
</dbReference>
<dbReference type="InterPro" id="IPR012678">
    <property type="entry name" value="Ribosomal_uL23/eL15/eS24_sf"/>
</dbReference>
<dbReference type="InterPro" id="IPR001014">
    <property type="entry name" value="Ribosomal_uL23_CS"/>
</dbReference>
<dbReference type="InterPro" id="IPR005633">
    <property type="entry name" value="Ribosomal_uL23_N"/>
</dbReference>
<dbReference type="NCBIfam" id="NF011118">
    <property type="entry name" value="PRK14548.1"/>
    <property type="match status" value="1"/>
</dbReference>
<dbReference type="PANTHER" id="PTHR11620">
    <property type="entry name" value="60S RIBOSOMAL PROTEIN L23A"/>
    <property type="match status" value="1"/>
</dbReference>
<dbReference type="Pfam" id="PF00276">
    <property type="entry name" value="Ribosomal_L23"/>
    <property type="match status" value="1"/>
</dbReference>
<dbReference type="Pfam" id="PF03939">
    <property type="entry name" value="Ribosomal_L23eN"/>
    <property type="match status" value="1"/>
</dbReference>
<dbReference type="SUPFAM" id="SSF54189">
    <property type="entry name" value="Ribosomal proteins S24e, L23 and L15e"/>
    <property type="match status" value="1"/>
</dbReference>
<dbReference type="PROSITE" id="PS00050">
    <property type="entry name" value="RIBOSOMAL_L23"/>
    <property type="match status" value="1"/>
</dbReference>
<protein>
    <recommendedName>
        <fullName evidence="1">Large ribosomal subunit protein uL23</fullName>
    </recommendedName>
    <alternativeName>
        <fullName>60S ribosomal protein L25</fullName>
    </alternativeName>
</protein>
<evidence type="ECO:0000305" key="1"/>
<name>RL25_CYBJA</name>
<reference key="1">
    <citation type="journal article" date="1987" name="Curr. Genet.">
        <title>Structural and putative regulatory sequences of the gene encoding ribosomal protein L25 in Candida utilis.</title>
        <authorList>
            <person name="Woudt L.P."/>
            <person name="Mager W.H."/>
            <person name="Beek J.G."/>
            <person name="Wassernaar G.M."/>
            <person name="Planta R.J."/>
        </authorList>
    </citation>
    <scope>NUCLEOTIDE SEQUENCE [GENOMIC DNA]</scope>
</reference>
<sequence length="142" mass="15632">MAPSTKAASAKKAVVKGSNGSKALKVRTSTTFRLPKTLKLTRAPKYARKAVPHYQRLDNYKVIVAPIASETAMKKVEDGNTLVFQVDIKANKHQIKQAVKDLYEVDVLAVNTLIRPNGTKKAYVRLTADHDALDIANKIGYI</sequence>
<proteinExistence type="inferred from homology"/>
<accession>P08792</accession>
<organism>
    <name type="scientific">Cyberlindnera jadinii</name>
    <name type="common">Torula yeast</name>
    <name type="synonym">Pichia jadinii</name>
    <dbReference type="NCBI Taxonomy" id="4903"/>
    <lineage>
        <taxon>Eukaryota</taxon>
        <taxon>Fungi</taxon>
        <taxon>Dikarya</taxon>
        <taxon>Ascomycota</taxon>
        <taxon>Saccharomycotina</taxon>
        <taxon>Saccharomycetes</taxon>
        <taxon>Phaffomycetales</taxon>
        <taxon>Phaffomycetaceae</taxon>
        <taxon>Cyberlindnera</taxon>
    </lineage>
</organism>
<gene>
    <name type="primary">RPL25</name>
</gene>
<comment type="function">
    <text>This protein binds to a specific region on the 26S rRNA.</text>
</comment>
<comment type="similarity">
    <text evidence="1">Belongs to the universal ribosomal protein uL23 family.</text>
</comment>
<keyword id="KW-0687">Ribonucleoprotein</keyword>
<keyword id="KW-0689">Ribosomal protein</keyword>
<keyword id="KW-0694">RNA-binding</keyword>
<keyword id="KW-0699">rRNA-binding</keyword>